<reference key="1">
    <citation type="journal article" date="2003" name="J. Biol. Chem.">
        <title>Novel aldoxime dehydratase involved in carbon-nitrogen triple bond synthesis of Pseudomonas chlororaphis B23. Sequencing, gene expression, purification, and characterization.</title>
        <authorList>
            <person name="Oinuma K."/>
            <person name="Hashimoto Y."/>
            <person name="Konishi K."/>
            <person name="Goda M."/>
            <person name="Noguchi T."/>
            <person name="Higashibata H."/>
            <person name="Kobayashi M."/>
        </authorList>
    </citation>
    <scope>NUCLEOTIDE SEQUENCE [GENOMIC DNA]</scope>
    <scope>FUNCTION</scope>
    <scope>CATALYTIC ACTIVITY</scope>
    <scope>COFACTOR</scope>
    <scope>ACTIVITY REGULATION</scope>
    <scope>BIOPHYSICOCHEMICAL PROPERTIES</scope>
    <scope>SUBUNIT</scope>
    <source>
        <strain>B23</strain>
    </source>
</reference>
<reference evidence="9" key="2">
    <citation type="journal article" date="2013" name="Proc. Natl. Acad. Sci. U.S.A.">
        <title>Crystal structure of aldoxime dehydratase and its catalytic mechanism involved in carbon-nitrogen triple-bond synthesis.</title>
        <authorList>
            <person name="Nomura J."/>
            <person name="Hashimoto H."/>
            <person name="Ohta T."/>
            <person name="Hashimoto Y."/>
            <person name="Wada K."/>
            <person name="Naruta Y."/>
            <person name="Oinuma K."/>
            <person name="Kobayashi M."/>
        </authorList>
    </citation>
    <scope>X-RAY CRYSTALLOGRAPHY (1.80 ANGSTROMS) IN COMPLEX WITH HEME</scope>
    <scope>FUNCTION</scope>
    <scope>CATALYTIC ACTIVITY</scope>
    <scope>COFACTOR</scope>
    <scope>ACTIVE SITE</scope>
    <scope>MUTAGENESIS OF GLU-143; ARG-178; SER-219; GLN-221 AND ASN-279</scope>
</reference>
<protein>
    <recommendedName>
        <fullName evidence="5">Aliphatic aldoxime dehydratase</fullName>
        <ecNumber evidence="2 3">4.8.1.2</ecNumber>
    </recommendedName>
    <alternativeName>
        <fullName evidence="4">Aldoxime dehydratase</fullName>
    </alternativeName>
</protein>
<accession>Q7WSJ4</accession>
<feature type="chain" id="PRO_0000456622" description="Aliphatic aldoxime dehydratase">
    <location>
        <begin position="1"/>
        <end position="352"/>
    </location>
</feature>
<feature type="active site" evidence="8">
    <location>
        <position position="320"/>
    </location>
</feature>
<feature type="binding site" evidence="1">
    <location>
        <position position="219"/>
    </location>
    <ligand>
        <name>an aliphatic aldoxime</name>
        <dbReference type="ChEBI" id="CHEBI:82744"/>
    </ligand>
</feature>
<feature type="binding site" description="axial binding residue" evidence="3 9">
    <location>
        <position position="299"/>
    </location>
    <ligand>
        <name>heme b</name>
        <dbReference type="ChEBI" id="CHEBI:60344"/>
    </ligand>
    <ligandPart>
        <name>Fe</name>
        <dbReference type="ChEBI" id="CHEBI:18248"/>
    </ligandPart>
</feature>
<feature type="binding site" evidence="1">
    <location>
        <position position="320"/>
    </location>
    <ligand>
        <name>an aliphatic aldoxime</name>
        <dbReference type="ChEBI" id="CHEBI:82744"/>
    </ligand>
</feature>
<feature type="mutagenesis site" description="Retains 95% of wild-type activity with butyraldoxime as substrate." evidence="3">
    <original>E</original>
    <variation>A</variation>
    <location>
        <position position="143"/>
    </location>
</feature>
<feature type="mutagenesis site" description="Retains 19% of wild-type activity with butyraldoxime as substrate. Significant decrease in heme content." evidence="3">
    <original>R</original>
    <variation>A</variation>
    <location>
        <position position="178"/>
    </location>
</feature>
<feature type="mutagenesis site" description="Loss of activity." evidence="3">
    <original>S</original>
    <variation>A</variation>
    <location>
        <position position="219"/>
    </location>
</feature>
<feature type="mutagenesis site" description="Retains 2% of wild-type activity with butyraldoxime as substrate." evidence="3">
    <original>S</original>
    <variation>C</variation>
    <location>
        <position position="219"/>
    </location>
</feature>
<feature type="mutagenesis site" description="Retains 26% of wild-type activity with butyraldoxime as substrate." evidence="3">
    <original>S</original>
    <variation>T</variation>
    <location>
        <position position="219"/>
    </location>
</feature>
<feature type="mutagenesis site" description="Retains 96% of wild-type activity with butyraldoxime as substrate." evidence="3">
    <original>Q</original>
    <variation>A</variation>
    <location>
        <position position="221"/>
    </location>
</feature>
<feature type="mutagenesis site" description="Retains 53% of wild-type activity with butyraldoxime as substrate." evidence="3">
    <original>N</original>
    <variation>A</variation>
    <location>
        <position position="279"/>
    </location>
</feature>
<feature type="helix" evidence="10">
    <location>
        <begin position="7"/>
        <end position="9"/>
    </location>
</feature>
<feature type="strand" evidence="10">
    <location>
        <begin position="42"/>
        <end position="50"/>
    </location>
</feature>
<feature type="helix" evidence="10">
    <location>
        <begin position="53"/>
        <end position="55"/>
    </location>
</feature>
<feature type="helix" evidence="10">
    <location>
        <begin position="56"/>
        <end position="69"/>
    </location>
</feature>
<feature type="strand" evidence="10">
    <location>
        <begin position="77"/>
        <end position="85"/>
    </location>
</feature>
<feature type="strand" evidence="10">
    <location>
        <begin position="91"/>
        <end position="100"/>
    </location>
</feature>
<feature type="helix" evidence="10">
    <location>
        <begin position="102"/>
        <end position="110"/>
    </location>
</feature>
<feature type="helix" evidence="10">
    <location>
        <begin position="112"/>
        <end position="119"/>
    </location>
</feature>
<feature type="helix" evidence="10">
    <location>
        <begin position="121"/>
        <end position="125"/>
    </location>
</feature>
<feature type="strand" evidence="10">
    <location>
        <begin position="129"/>
        <end position="135"/>
    </location>
</feature>
<feature type="helix" evidence="10">
    <location>
        <begin position="139"/>
        <end position="141"/>
    </location>
</feature>
<feature type="strand" evidence="10">
    <location>
        <begin position="142"/>
        <end position="151"/>
    </location>
</feature>
<feature type="helix" evidence="10">
    <location>
        <begin position="154"/>
        <end position="158"/>
    </location>
</feature>
<feature type="strand" evidence="10">
    <location>
        <begin position="159"/>
        <end position="162"/>
    </location>
</feature>
<feature type="strand" evidence="10">
    <location>
        <begin position="166"/>
        <end position="168"/>
    </location>
</feature>
<feature type="helix" evidence="10">
    <location>
        <begin position="174"/>
        <end position="178"/>
    </location>
</feature>
<feature type="helix" evidence="10">
    <location>
        <begin position="180"/>
        <end position="183"/>
    </location>
</feature>
<feature type="strand" evidence="10">
    <location>
        <begin position="194"/>
        <end position="198"/>
    </location>
</feature>
<feature type="helix" evidence="10">
    <location>
        <begin position="200"/>
        <end position="202"/>
    </location>
</feature>
<feature type="strand" evidence="10">
    <location>
        <begin position="204"/>
        <end position="209"/>
    </location>
</feature>
<feature type="strand" evidence="10">
    <location>
        <begin position="214"/>
        <end position="222"/>
    </location>
</feature>
<feature type="helix" evidence="10">
    <location>
        <begin position="228"/>
        <end position="237"/>
    </location>
</feature>
<feature type="helix" evidence="10">
    <location>
        <begin position="239"/>
        <end position="252"/>
    </location>
</feature>
<feature type="helix" evidence="10">
    <location>
        <begin position="254"/>
        <end position="256"/>
    </location>
</feature>
<feature type="strand" evidence="10">
    <location>
        <begin position="258"/>
        <end position="267"/>
    </location>
</feature>
<feature type="strand" evidence="10">
    <location>
        <begin position="273"/>
        <end position="284"/>
    </location>
</feature>
<feature type="helix" evidence="10">
    <location>
        <begin position="286"/>
        <end position="295"/>
    </location>
</feature>
<feature type="helix" evidence="10">
    <location>
        <begin position="297"/>
        <end position="309"/>
    </location>
</feature>
<feature type="turn" evidence="10">
    <location>
        <begin position="310"/>
        <end position="312"/>
    </location>
</feature>
<feature type="strand" evidence="10">
    <location>
        <begin position="317"/>
        <end position="325"/>
    </location>
</feature>
<feature type="helix" evidence="10">
    <location>
        <begin position="327"/>
        <end position="329"/>
    </location>
</feature>
<feature type="strand" evidence="10">
    <location>
        <begin position="330"/>
        <end position="336"/>
    </location>
</feature>
<feature type="helix" evidence="10">
    <location>
        <begin position="342"/>
        <end position="344"/>
    </location>
</feature>
<keyword id="KW-0002">3D-structure</keyword>
<keyword id="KW-0349">Heme</keyword>
<keyword id="KW-0408">Iron</keyword>
<keyword id="KW-0456">Lyase</keyword>
<keyword id="KW-0479">Metal-binding</keyword>
<gene>
    <name evidence="4" type="primary">oxdA</name>
</gene>
<name>OXD_PSECL</name>
<comment type="function">
    <text evidence="2 3">Catalyzes the dehydration of aldoximes to their corresponding nitrile (PubMed:12773527, PubMed:23382199). Aliphatic aldoximes are more effective substrates than aromatic aldoximes (PubMed:12773527). Shows high activity with butyraldoxime and acetaldoxime, but only weak activity with the aromatic aldoxime pyridine-2-aldoxime (PubMed:12773527). Cannot use benzaldoxime, isonitrosoacetophenone and pyridine-4-aldoxime (PubMed:12773527). Is involved in the metabolism of aldoxime in vivo (PubMed:12773527).</text>
</comment>
<comment type="catalytic activity">
    <reaction evidence="2 3">
        <text>an aliphatic aldoxime = a nitrile + H2O</text>
        <dbReference type="Rhea" id="RHEA:11316"/>
        <dbReference type="ChEBI" id="CHEBI:15377"/>
        <dbReference type="ChEBI" id="CHEBI:18379"/>
        <dbReference type="ChEBI" id="CHEBI:82744"/>
        <dbReference type="EC" id="4.8.1.2"/>
    </reaction>
    <physiologicalReaction direction="left-to-right" evidence="2">
        <dbReference type="Rhea" id="RHEA:11317"/>
    </physiologicalReaction>
</comment>
<comment type="cofactor">
    <cofactor evidence="2 3">
        <name>heme b</name>
        <dbReference type="ChEBI" id="CHEBI:60344"/>
    </cofactor>
    <text evidence="8">The substrate is directly bound to the heme iron.</text>
</comment>
<comment type="cofactor">
    <cofactor evidence="7">
        <name>Ca(2+)</name>
        <dbReference type="ChEBI" id="CHEBI:29108"/>
    </cofactor>
    <text evidence="7">Calcium may act as a cofactor.</text>
</comment>
<comment type="activity regulation">
    <text evidence="2">Active when the heme iron is in the ferrous state (PubMed:12773527). Is very sensitive to AgNO(3), is also inhibited by hydroxylamine and phenylhydrazine, and hardly inhibited by thiol reagents (PubMed:12773527). Not sensitive to chelating agents and serine-modifying reagents (PubMed:12773527).</text>
</comment>
<comment type="biophysicochemical properties">
    <kinetics>
        <KM evidence="2">0.25 mM for butyraldoxime</KM>
        <KM evidence="2">11 mM for acetaldoxime</KM>
        <KM evidence="2">3.4 mM for pyridine-2-aldoxime</KM>
        <text evidence="2">kcat is 5.4 min(-1) with butyraldoxime as substrate. kcat is 5.6 min(-1) with acetaldoxime as substrate. kcat is 0.090 min(-1) with pyridine-2-aldoxime as substrate.</text>
    </kinetics>
    <phDependence>
        <text evidence="2">Optimum pH is 5.5. Another high activity level is observed at pH 9.4.</text>
    </phDependence>
    <temperatureDependence>
        <text evidence="2">Optimum temperature is 45 degrees Celsius.</text>
    </temperatureDependence>
</comment>
<comment type="subunit">
    <text evidence="2">Homodimer.</text>
</comment>
<comment type="similarity">
    <text evidence="6">Belongs to the heme-containing dehydratase family.</text>
</comment>
<evidence type="ECO:0000250" key="1">
    <source>
        <dbReference type="UniProtKB" id="Q76K71"/>
    </source>
</evidence>
<evidence type="ECO:0000269" key="2">
    <source>
    </source>
</evidence>
<evidence type="ECO:0000269" key="3">
    <source>
    </source>
</evidence>
<evidence type="ECO:0000303" key="4">
    <source>
    </source>
</evidence>
<evidence type="ECO:0000303" key="5">
    <source>
    </source>
</evidence>
<evidence type="ECO:0000305" key="6"/>
<evidence type="ECO:0000305" key="7">
    <source>
    </source>
</evidence>
<evidence type="ECO:0000305" key="8">
    <source>
    </source>
</evidence>
<evidence type="ECO:0007744" key="9">
    <source>
        <dbReference type="PDB" id="3W08"/>
    </source>
</evidence>
<evidence type="ECO:0007829" key="10">
    <source>
        <dbReference type="PDB" id="3W08"/>
    </source>
</evidence>
<organism>
    <name type="scientific">Pseudomonas chlororaphis</name>
    <name type="common">Pseudomonas aureofaciens</name>
    <dbReference type="NCBI Taxonomy" id="333"/>
    <lineage>
        <taxon>Bacteria</taxon>
        <taxon>Pseudomonadati</taxon>
        <taxon>Pseudomonadota</taxon>
        <taxon>Gammaproteobacteria</taxon>
        <taxon>Pseudomonadales</taxon>
        <taxon>Pseudomonadaceae</taxon>
        <taxon>Pseudomonas</taxon>
    </lineage>
</organism>
<proteinExistence type="evidence at protein level"/>
<dbReference type="EC" id="4.8.1.2" evidence="2 3"/>
<dbReference type="EMBL" id="AB093544">
    <property type="protein sequence ID" value="BAC81537.1"/>
    <property type="molecule type" value="Genomic_DNA"/>
</dbReference>
<dbReference type="PDB" id="3W08">
    <property type="method" value="X-ray"/>
    <property type="resolution" value="1.80 A"/>
    <property type="chains" value="A/B=1-352"/>
</dbReference>
<dbReference type="PDBsum" id="3W08"/>
<dbReference type="SMR" id="Q7WSJ4"/>
<dbReference type="KEGG" id="ag:BAC81537"/>
<dbReference type="BioCyc" id="MetaCyc:MONOMER-15569"/>
<dbReference type="BRENDA" id="4.99.1.5">
    <property type="organism ID" value="5105"/>
</dbReference>
<dbReference type="SABIO-RK" id="Q7WSJ4"/>
<dbReference type="EvolutionaryTrace" id="Q7WSJ4"/>
<dbReference type="GO" id="GO:0016829">
    <property type="term" value="F:lyase activity"/>
    <property type="evidence" value="ECO:0007669"/>
    <property type="project" value="UniProtKB-KW"/>
</dbReference>
<dbReference type="GO" id="GO:0046872">
    <property type="term" value="F:metal ion binding"/>
    <property type="evidence" value="ECO:0007669"/>
    <property type="project" value="UniProtKB-KW"/>
</dbReference>
<dbReference type="InterPro" id="IPR025702">
    <property type="entry name" value="OXD"/>
</dbReference>
<dbReference type="Pfam" id="PF13816">
    <property type="entry name" value="Dehydratase_hem"/>
    <property type="match status" value="1"/>
</dbReference>
<sequence length="352" mass="40129">MESAIDTHLKCPRTLSRRVPEEYQPPFPMWVARADEQLQQVVMGYLGVQYRGEAQREAALQAMRHIVSSFSLPDGPQTHDLTHHTDSSGFDNLMVVGYWKDPAAHCRWLRSAEVNDWWTSQDRLGEGLGYFREISAPRAEQFETLYAFQDNLPGVGAVMDSTSGEIEEHGYWGSMRDRFPISQTDWMKPTNELQVVAGDPAKGGRVVIMGHDNIALIRSGQDWADAEAEERSLYLDEILPTLQDGMDFLRDNGQPLGCYSNRFVRNIDLDGNFLDVSYNIGHWRSLEKLERWAESHPTHLRIFVTFFRVAAGLKKLRLYHEVSVSDAKSQVFEYINCHPHTGMLRDAVVAPT</sequence>